<protein>
    <recommendedName>
        <fullName evidence="1">Global transcriptional regulator CodY</fullName>
    </recommendedName>
</protein>
<organism>
    <name type="scientific">Streptococcus pneumoniae (strain Taiwan19F-14)</name>
    <dbReference type="NCBI Taxonomy" id="487213"/>
    <lineage>
        <taxon>Bacteria</taxon>
        <taxon>Bacillati</taxon>
        <taxon>Bacillota</taxon>
        <taxon>Bacilli</taxon>
        <taxon>Lactobacillales</taxon>
        <taxon>Streptococcaceae</taxon>
        <taxon>Streptococcus</taxon>
    </lineage>
</organism>
<keyword id="KW-0963">Cytoplasm</keyword>
<keyword id="KW-0238">DNA-binding</keyword>
<keyword id="KW-0678">Repressor</keyword>
<keyword id="KW-0804">Transcription</keyword>
<keyword id="KW-0805">Transcription regulation</keyword>
<gene>
    <name evidence="1" type="primary">codY</name>
    <name type="ordered locus">SPT_1523</name>
</gene>
<reference key="1">
    <citation type="journal article" date="2010" name="Genome Biol.">
        <title>Structure and dynamics of the pan-genome of Streptococcus pneumoniae and closely related species.</title>
        <authorList>
            <person name="Donati C."/>
            <person name="Hiller N.L."/>
            <person name="Tettelin H."/>
            <person name="Muzzi A."/>
            <person name="Croucher N.J."/>
            <person name="Angiuoli S.V."/>
            <person name="Oggioni M."/>
            <person name="Dunning Hotopp J.C."/>
            <person name="Hu F.Z."/>
            <person name="Riley D.R."/>
            <person name="Covacci A."/>
            <person name="Mitchell T.J."/>
            <person name="Bentley S.D."/>
            <person name="Kilian M."/>
            <person name="Ehrlich G.D."/>
            <person name="Rappuoli R."/>
            <person name="Moxon E.R."/>
            <person name="Masignani V."/>
        </authorList>
    </citation>
    <scope>NUCLEOTIDE SEQUENCE [LARGE SCALE GENOMIC DNA]</scope>
    <source>
        <strain>Taiwan19F-14</strain>
    </source>
</reference>
<dbReference type="EMBL" id="CP000921">
    <property type="protein sequence ID" value="ACO23635.1"/>
    <property type="molecule type" value="Genomic_DNA"/>
</dbReference>
<dbReference type="RefSeq" id="WP_000940733.1">
    <property type="nucleotide sequence ID" value="NC_012469.1"/>
</dbReference>
<dbReference type="SMR" id="C1CSK2"/>
<dbReference type="GeneID" id="45653181"/>
<dbReference type="KEGG" id="snt:SPT_1523"/>
<dbReference type="HOGENOM" id="CLU_089581_0_0_9"/>
<dbReference type="GO" id="GO:0005737">
    <property type="term" value="C:cytoplasm"/>
    <property type="evidence" value="ECO:0007669"/>
    <property type="project" value="UniProtKB-SubCell"/>
</dbReference>
<dbReference type="GO" id="GO:0003677">
    <property type="term" value="F:DNA binding"/>
    <property type="evidence" value="ECO:0007669"/>
    <property type="project" value="UniProtKB-UniRule"/>
</dbReference>
<dbReference type="GO" id="GO:0003700">
    <property type="term" value="F:DNA-binding transcription factor activity"/>
    <property type="evidence" value="ECO:0007669"/>
    <property type="project" value="InterPro"/>
</dbReference>
<dbReference type="GO" id="GO:0005525">
    <property type="term" value="F:GTP binding"/>
    <property type="evidence" value="ECO:0007669"/>
    <property type="project" value="InterPro"/>
</dbReference>
<dbReference type="GO" id="GO:0045892">
    <property type="term" value="P:negative regulation of DNA-templated transcription"/>
    <property type="evidence" value="ECO:0007669"/>
    <property type="project" value="UniProtKB-UniRule"/>
</dbReference>
<dbReference type="CDD" id="cd00090">
    <property type="entry name" value="HTH_ARSR"/>
    <property type="match status" value="1"/>
</dbReference>
<dbReference type="FunFam" id="1.10.10.10:FF:000034">
    <property type="entry name" value="GTP-sensing transcriptional pleiotropic repressor CodY"/>
    <property type="match status" value="1"/>
</dbReference>
<dbReference type="FunFam" id="3.30.450.40:FF:000003">
    <property type="entry name" value="GTP-sensing transcriptional pleiotropic repressor CodY"/>
    <property type="match status" value="1"/>
</dbReference>
<dbReference type="Gene3D" id="3.30.450.40">
    <property type="match status" value="1"/>
</dbReference>
<dbReference type="Gene3D" id="1.10.10.10">
    <property type="entry name" value="Winged helix-like DNA-binding domain superfamily/Winged helix DNA-binding domain"/>
    <property type="match status" value="1"/>
</dbReference>
<dbReference type="HAMAP" id="MF_00621">
    <property type="entry name" value="HTH_type_CodY"/>
    <property type="match status" value="1"/>
</dbReference>
<dbReference type="InterPro" id="IPR011991">
    <property type="entry name" value="ArsR-like_HTH"/>
</dbReference>
<dbReference type="InterPro" id="IPR014154">
    <property type="entry name" value="CodY"/>
</dbReference>
<dbReference type="InterPro" id="IPR029016">
    <property type="entry name" value="GAF-like_dom_sf"/>
</dbReference>
<dbReference type="InterPro" id="IPR013198">
    <property type="entry name" value="GTP_trans_reg_CodY_C"/>
</dbReference>
<dbReference type="InterPro" id="IPR010312">
    <property type="entry name" value="Transc_reg_CodY_N"/>
</dbReference>
<dbReference type="InterPro" id="IPR036388">
    <property type="entry name" value="WH-like_DNA-bd_sf"/>
</dbReference>
<dbReference type="InterPro" id="IPR036390">
    <property type="entry name" value="WH_DNA-bd_sf"/>
</dbReference>
<dbReference type="NCBIfam" id="TIGR02787">
    <property type="entry name" value="codY_Gpos"/>
    <property type="match status" value="1"/>
</dbReference>
<dbReference type="NCBIfam" id="NF003170">
    <property type="entry name" value="PRK04158.1"/>
    <property type="match status" value="1"/>
</dbReference>
<dbReference type="PANTHER" id="PTHR40062:SF1">
    <property type="entry name" value="GLOBAL TRANSCRIPTIONAL REGULATOR CODY"/>
    <property type="match status" value="1"/>
</dbReference>
<dbReference type="PANTHER" id="PTHR40062">
    <property type="entry name" value="GTP-SENSING TRANSCRIPTIONAL PLEIOTROPIC REPRESSOR CODY"/>
    <property type="match status" value="1"/>
</dbReference>
<dbReference type="Pfam" id="PF06018">
    <property type="entry name" value="CodY"/>
    <property type="match status" value="1"/>
</dbReference>
<dbReference type="Pfam" id="PF08222">
    <property type="entry name" value="HTH_CodY"/>
    <property type="match status" value="1"/>
</dbReference>
<dbReference type="PIRSF" id="PIRSF011572">
    <property type="entry name" value="GTP_sensing_CodY"/>
    <property type="match status" value="1"/>
</dbReference>
<dbReference type="SUPFAM" id="SSF46785">
    <property type="entry name" value="Winged helix' DNA-binding domain"/>
    <property type="match status" value="1"/>
</dbReference>
<accession>C1CSK2</accession>
<feature type="chain" id="PRO_1000147214" description="Global transcriptional regulator CodY">
    <location>
        <begin position="1"/>
        <end position="262"/>
    </location>
</feature>
<feature type="DNA-binding region" description="H-T-H motif" evidence="1">
    <location>
        <begin position="207"/>
        <end position="226"/>
    </location>
</feature>
<feature type="region of interest" description="GAF domain" evidence="1">
    <location>
        <begin position="1"/>
        <end position="159"/>
    </location>
</feature>
<evidence type="ECO:0000255" key="1">
    <source>
        <dbReference type="HAMAP-Rule" id="MF_00621"/>
    </source>
</evidence>
<sequence length="262" mass="29756">MAHLLEKTRKITSILKRSEEQLQDELPYNAITRQLADIIHCNACIINSKGRLLGYFMRYKTNTDRVEQFFQTKIFPDDYVQGANMIYETEANLPVEHDMSIFPVESRDDFPDGLTTIAPIHVSGIRLGSLIIWRNDKKFEDEDLVLVEIASTVVGIQLLNFQREEDEKNIRRRTAVTMAVNTLSYSELRAVSAILGELNGNEGKLTASVIADRIGITRSVIVNALRKLESAGIIESRSLGMKGTYLKVLISDIFEEVKKRDY</sequence>
<comment type="function">
    <text evidence="1">DNA-binding global transcriptional regulator which is involved in the adaptive response to starvation and acts by directly or indirectly controlling the expression of numerous genes in response to nutrient availability. During rapid exponential growth, CodY is highly active and represses genes whose products allow adaptation to nutrient depletion.</text>
</comment>
<comment type="subcellular location">
    <subcellularLocation>
        <location evidence="1">Cytoplasm</location>
    </subcellularLocation>
</comment>
<comment type="similarity">
    <text evidence="1">Belongs to the CodY family.</text>
</comment>
<name>CODY_STRZT</name>
<proteinExistence type="inferred from homology"/>